<organism>
    <name type="scientific">Yersinia pestis bv. Antiqua (strain Antiqua)</name>
    <dbReference type="NCBI Taxonomy" id="360102"/>
    <lineage>
        <taxon>Bacteria</taxon>
        <taxon>Pseudomonadati</taxon>
        <taxon>Pseudomonadota</taxon>
        <taxon>Gammaproteobacteria</taxon>
        <taxon>Enterobacterales</taxon>
        <taxon>Yersiniaceae</taxon>
        <taxon>Yersinia</taxon>
    </lineage>
</organism>
<protein>
    <recommendedName>
        <fullName evidence="1">Small heat shock protein IbpA</fullName>
    </recommendedName>
    <alternativeName>
        <fullName evidence="1">16 kDa heat shock protein A</fullName>
    </alternativeName>
</protein>
<feature type="chain" id="PRO_1000022027" description="Small heat shock protein IbpA">
    <location>
        <begin position="1"/>
        <end position="137"/>
    </location>
</feature>
<feature type="domain" description="sHSP" evidence="2">
    <location>
        <begin position="28"/>
        <end position="137"/>
    </location>
</feature>
<dbReference type="EMBL" id="CP000308">
    <property type="protein sequence ID" value="ABG14962.1"/>
    <property type="molecule type" value="Genomic_DNA"/>
</dbReference>
<dbReference type="RefSeq" id="WP_002209636.1">
    <property type="nucleotide sequence ID" value="NZ_CP009906.1"/>
</dbReference>
<dbReference type="SMR" id="Q1C3L0"/>
<dbReference type="GeneID" id="96663430"/>
<dbReference type="KEGG" id="ypa:YPA_3000"/>
<dbReference type="Proteomes" id="UP000001971">
    <property type="component" value="Chromosome"/>
</dbReference>
<dbReference type="GO" id="GO:0005737">
    <property type="term" value="C:cytoplasm"/>
    <property type="evidence" value="ECO:0007669"/>
    <property type="project" value="UniProtKB-SubCell"/>
</dbReference>
<dbReference type="GO" id="GO:0050821">
    <property type="term" value="P:protein stabilization"/>
    <property type="evidence" value="ECO:0007669"/>
    <property type="project" value="UniProtKB-UniRule"/>
</dbReference>
<dbReference type="CDD" id="cd06470">
    <property type="entry name" value="ACD_IbpA-B_like"/>
    <property type="match status" value="1"/>
</dbReference>
<dbReference type="FunFam" id="2.60.40.790:FF:000002">
    <property type="entry name" value="Small heat shock protein IbpA"/>
    <property type="match status" value="1"/>
</dbReference>
<dbReference type="Gene3D" id="2.60.40.790">
    <property type="match status" value="1"/>
</dbReference>
<dbReference type="HAMAP" id="MF_02000">
    <property type="entry name" value="HSP20_IbpA"/>
    <property type="match status" value="1"/>
</dbReference>
<dbReference type="InterPro" id="IPR002068">
    <property type="entry name" value="A-crystallin/Hsp20_dom"/>
</dbReference>
<dbReference type="InterPro" id="IPR037913">
    <property type="entry name" value="ACD_IbpA/B"/>
</dbReference>
<dbReference type="InterPro" id="IPR008978">
    <property type="entry name" value="HSP20-like_chaperone"/>
</dbReference>
<dbReference type="InterPro" id="IPR023728">
    <property type="entry name" value="HSP20_IbpA"/>
</dbReference>
<dbReference type="NCBIfam" id="NF008013">
    <property type="entry name" value="PRK10743.1"/>
    <property type="match status" value="1"/>
</dbReference>
<dbReference type="PANTHER" id="PTHR47062">
    <property type="match status" value="1"/>
</dbReference>
<dbReference type="PANTHER" id="PTHR47062:SF1">
    <property type="entry name" value="SMALL HEAT SHOCK PROTEIN IBPA"/>
    <property type="match status" value="1"/>
</dbReference>
<dbReference type="Pfam" id="PF00011">
    <property type="entry name" value="HSP20"/>
    <property type="match status" value="1"/>
</dbReference>
<dbReference type="SUPFAM" id="SSF49764">
    <property type="entry name" value="HSP20-like chaperones"/>
    <property type="match status" value="1"/>
</dbReference>
<dbReference type="PROSITE" id="PS01031">
    <property type="entry name" value="SHSP"/>
    <property type="match status" value="1"/>
</dbReference>
<evidence type="ECO:0000255" key="1">
    <source>
        <dbReference type="HAMAP-Rule" id="MF_02000"/>
    </source>
</evidence>
<evidence type="ECO:0000255" key="2">
    <source>
        <dbReference type="PROSITE-ProRule" id="PRU00285"/>
    </source>
</evidence>
<keyword id="KW-0143">Chaperone</keyword>
<keyword id="KW-0963">Cytoplasm</keyword>
<keyword id="KW-0346">Stress response</keyword>
<comment type="function">
    <text evidence="1">Associates with aggregated proteins, together with IbpB, to stabilize and protect them from irreversible denaturation and extensive proteolysis during heat shock and oxidative stress. Aggregated proteins bound to the IbpAB complex are more efficiently refolded and reactivated by the ATP-dependent chaperone systems ClpB and DnaK/DnaJ/GrpE. Its activity is ATP-independent.</text>
</comment>
<comment type="subunit">
    <text evidence="1">Monomer. Forms homomultimers of about 100-150 subunits at optimal growth temperatures. Conformation changes to monomers at high temperatures or high ionic concentrations.</text>
</comment>
<comment type="subcellular location">
    <subcellularLocation>
        <location evidence="1">Cytoplasm</location>
    </subcellularLocation>
</comment>
<comment type="similarity">
    <text evidence="1 2">Belongs to the small heat shock protein (HSP20) family.</text>
</comment>
<sequence>MRNSDLAPLYRSAIGFDRLFNLLESGQNQSNGGYPPYNVELVDENNYRIAIAVAGFAEQELEITTQDNLLIVRGSHANEPAQRTYLYQGIAERNFERKFQLAEHIKIKGANLVNGLLYIDLERLVPESLKPRRIEIK</sequence>
<proteinExistence type="inferred from homology"/>
<accession>Q1C3L0</accession>
<reference key="1">
    <citation type="journal article" date="2006" name="J. Bacteriol.">
        <title>Complete genome sequence of Yersinia pestis strains Antiqua and Nepal516: evidence of gene reduction in an emerging pathogen.</title>
        <authorList>
            <person name="Chain P.S.G."/>
            <person name="Hu P."/>
            <person name="Malfatti S.A."/>
            <person name="Radnedge L."/>
            <person name="Larimer F."/>
            <person name="Vergez L.M."/>
            <person name="Worsham P."/>
            <person name="Chu M.C."/>
            <person name="Andersen G.L."/>
        </authorList>
    </citation>
    <scope>NUCLEOTIDE SEQUENCE [LARGE SCALE GENOMIC DNA]</scope>
    <source>
        <strain>Antiqua</strain>
    </source>
</reference>
<name>IBPA_YERPA</name>
<gene>
    <name evidence="1" type="primary">ibpA</name>
    <name type="ordered locus">YPA_3000</name>
</gene>